<name>GLCD1_HALTV</name>
<feature type="chain" id="PRO_0000414833" description="Glucose 1-dehydrogenase 1">
    <location>
        <begin position="1"/>
        <end position="365"/>
    </location>
</feature>
<feature type="binding site" evidence="1">
    <location>
        <position position="38"/>
    </location>
    <ligand>
        <name>Zn(2+)</name>
        <dbReference type="ChEBI" id="CHEBI:29105"/>
        <note>catalytic</note>
    </ligand>
</feature>
<feature type="binding site" evidence="1">
    <location>
        <position position="40"/>
    </location>
    <ligand>
        <name>substrate</name>
    </ligand>
</feature>
<feature type="binding site" evidence="1">
    <location>
        <position position="63"/>
    </location>
    <ligand>
        <name>Zn(2+)</name>
        <dbReference type="ChEBI" id="CHEBI:29105"/>
        <note>catalytic</note>
    </ligand>
</feature>
<feature type="binding site" evidence="1">
    <location>
        <position position="64"/>
    </location>
    <ligand>
        <name>Zn(2+)</name>
        <dbReference type="ChEBI" id="CHEBI:29105"/>
        <note>catalytic</note>
    </ligand>
</feature>
<feature type="binding site" evidence="1">
    <location>
        <position position="115"/>
    </location>
    <ligand>
        <name>substrate</name>
    </ligand>
</feature>
<feature type="binding site" evidence="1">
    <location>
        <position position="151"/>
    </location>
    <ligand>
        <name>substrate</name>
    </ligand>
</feature>
<feature type="binding site" evidence="1">
    <location>
        <position position="151"/>
    </location>
    <ligand>
        <name>Zn(2+)</name>
        <dbReference type="ChEBI" id="CHEBI:29105"/>
        <note>catalytic</note>
    </ligand>
</feature>
<feature type="binding site" evidence="1">
    <location>
        <begin position="182"/>
        <end position="185"/>
    </location>
    <ligand>
        <name>NADP(+)</name>
        <dbReference type="ChEBI" id="CHEBI:58349"/>
    </ligand>
</feature>
<feature type="binding site" evidence="1">
    <location>
        <begin position="207"/>
        <end position="208"/>
    </location>
    <ligand>
        <name>NADP(+)</name>
        <dbReference type="ChEBI" id="CHEBI:58349"/>
    </ligand>
</feature>
<feature type="binding site" evidence="1">
    <location>
        <begin position="272"/>
        <end position="274"/>
    </location>
    <ligand>
        <name>NADP(+)</name>
        <dbReference type="ChEBI" id="CHEBI:58349"/>
    </ligand>
</feature>
<feature type="binding site" evidence="1">
    <location>
        <begin position="301"/>
        <end position="303"/>
    </location>
    <ligand>
        <name>NADP(+)</name>
        <dbReference type="ChEBI" id="CHEBI:58349"/>
    </ligand>
</feature>
<feature type="binding site" evidence="1">
    <location>
        <position position="303"/>
    </location>
    <ligand>
        <name>substrate</name>
    </ligand>
</feature>
<keyword id="KW-0119">Carbohydrate metabolism</keyword>
<keyword id="KW-0479">Metal-binding</keyword>
<keyword id="KW-0520">NAD</keyword>
<keyword id="KW-0521">NADP</keyword>
<keyword id="KW-0547">Nucleotide-binding</keyword>
<keyword id="KW-0560">Oxidoreductase</keyword>
<keyword id="KW-0862">Zinc</keyword>
<accession>D2RW30</accession>
<proteinExistence type="inferred from homology"/>
<dbReference type="EC" id="1.1.1.47" evidence="1"/>
<dbReference type="EMBL" id="CP001860">
    <property type="protein sequence ID" value="ADB61459.1"/>
    <property type="molecule type" value="Genomic_DNA"/>
</dbReference>
<dbReference type="RefSeq" id="WP_012943735.1">
    <property type="nucleotide sequence ID" value="NC_013743.1"/>
</dbReference>
<dbReference type="SMR" id="D2RW30"/>
<dbReference type="STRING" id="543526.Htur_2582"/>
<dbReference type="GeneID" id="8743195"/>
<dbReference type="KEGG" id="htu:Htur_2582"/>
<dbReference type="eggNOG" id="arCOG01459">
    <property type="taxonomic scope" value="Archaea"/>
</dbReference>
<dbReference type="HOGENOM" id="CLU_026673_1_0_2"/>
<dbReference type="OrthoDB" id="41394at2157"/>
<dbReference type="Proteomes" id="UP000001903">
    <property type="component" value="Chromosome"/>
</dbReference>
<dbReference type="GO" id="GO:0005536">
    <property type="term" value="F:D-glucose binding"/>
    <property type="evidence" value="ECO:0007669"/>
    <property type="project" value="UniProtKB-UniRule"/>
</dbReference>
<dbReference type="GO" id="GO:0047934">
    <property type="term" value="F:glucose 1-dehydrogenase (NAD+) activity"/>
    <property type="evidence" value="ECO:0007669"/>
    <property type="project" value="RHEA"/>
</dbReference>
<dbReference type="GO" id="GO:0047935">
    <property type="term" value="F:glucose 1-dehydrogenase (NADP+) activity"/>
    <property type="evidence" value="ECO:0007669"/>
    <property type="project" value="RHEA"/>
</dbReference>
<dbReference type="GO" id="GO:0070403">
    <property type="term" value="F:NAD+ binding"/>
    <property type="evidence" value="ECO:0007669"/>
    <property type="project" value="UniProtKB-UniRule"/>
</dbReference>
<dbReference type="GO" id="GO:0070401">
    <property type="term" value="F:NADP+ binding"/>
    <property type="evidence" value="ECO:0007669"/>
    <property type="project" value="UniProtKB-UniRule"/>
</dbReference>
<dbReference type="GO" id="GO:0008270">
    <property type="term" value="F:zinc ion binding"/>
    <property type="evidence" value="ECO:0007669"/>
    <property type="project" value="UniProtKB-UniRule"/>
</dbReference>
<dbReference type="GO" id="GO:0019595">
    <property type="term" value="P:non-phosphorylated glucose catabolic process"/>
    <property type="evidence" value="ECO:0007669"/>
    <property type="project" value="UniProtKB-UniRule"/>
</dbReference>
<dbReference type="CDD" id="cd08230">
    <property type="entry name" value="glucose_DH"/>
    <property type="match status" value="1"/>
</dbReference>
<dbReference type="Gene3D" id="3.90.180.10">
    <property type="entry name" value="Medium-chain alcohol dehydrogenases, catalytic domain"/>
    <property type="match status" value="1"/>
</dbReference>
<dbReference type="Gene3D" id="3.40.50.720">
    <property type="entry name" value="NAD(P)-binding Rossmann-like Domain"/>
    <property type="match status" value="1"/>
</dbReference>
<dbReference type="HAMAP" id="MF_02127">
    <property type="entry name" value="Glucose_DH"/>
    <property type="match status" value="1"/>
</dbReference>
<dbReference type="InterPro" id="IPR013154">
    <property type="entry name" value="ADH-like_N"/>
</dbReference>
<dbReference type="InterPro" id="IPR026583">
    <property type="entry name" value="Glc_1-DH_arc"/>
</dbReference>
<dbReference type="InterPro" id="IPR031640">
    <property type="entry name" value="Glu_dehyd_C"/>
</dbReference>
<dbReference type="InterPro" id="IPR011032">
    <property type="entry name" value="GroES-like_sf"/>
</dbReference>
<dbReference type="InterPro" id="IPR036291">
    <property type="entry name" value="NAD(P)-bd_dom_sf"/>
</dbReference>
<dbReference type="PANTHER" id="PTHR43189:SF2">
    <property type="entry name" value="GLUCOSE 1-DEHYDROGENASE"/>
    <property type="match status" value="1"/>
</dbReference>
<dbReference type="PANTHER" id="PTHR43189">
    <property type="entry name" value="ZINC-TYPE ALCOHOL DEHYDROGENASE-LIKE PROTEIN C1198.01-RELATED"/>
    <property type="match status" value="1"/>
</dbReference>
<dbReference type="Pfam" id="PF08240">
    <property type="entry name" value="ADH_N"/>
    <property type="match status" value="1"/>
</dbReference>
<dbReference type="Pfam" id="PF16912">
    <property type="entry name" value="Glu_dehyd_C"/>
    <property type="match status" value="1"/>
</dbReference>
<dbReference type="SUPFAM" id="SSF50129">
    <property type="entry name" value="GroES-like"/>
    <property type="match status" value="1"/>
</dbReference>
<dbReference type="SUPFAM" id="SSF51735">
    <property type="entry name" value="NAD(P)-binding Rossmann-fold domains"/>
    <property type="match status" value="1"/>
</dbReference>
<comment type="function">
    <text evidence="1">Catalyzes the NAD(P)(+)-dependent oxidation of D-glucose to D-gluconate via gluconolactone. Can utilize both NAD(+) and NADP(+) as electron acceptor. Is involved in the degradation of glucose through a modified Entner-Doudoroff pathway.</text>
</comment>
<comment type="catalytic activity">
    <reaction evidence="1">
        <text>D-glucose + NAD(+) = D-glucono-1,5-lactone + NADH + H(+)</text>
        <dbReference type="Rhea" id="RHEA:14293"/>
        <dbReference type="ChEBI" id="CHEBI:4167"/>
        <dbReference type="ChEBI" id="CHEBI:15378"/>
        <dbReference type="ChEBI" id="CHEBI:16217"/>
        <dbReference type="ChEBI" id="CHEBI:57540"/>
        <dbReference type="ChEBI" id="CHEBI:57945"/>
        <dbReference type="EC" id="1.1.1.47"/>
    </reaction>
</comment>
<comment type="catalytic activity">
    <reaction evidence="1">
        <text>D-glucose + NADP(+) = D-glucono-1,5-lactone + NADPH + H(+)</text>
        <dbReference type="Rhea" id="RHEA:14405"/>
        <dbReference type="ChEBI" id="CHEBI:4167"/>
        <dbReference type="ChEBI" id="CHEBI:15378"/>
        <dbReference type="ChEBI" id="CHEBI:16217"/>
        <dbReference type="ChEBI" id="CHEBI:57783"/>
        <dbReference type="ChEBI" id="CHEBI:58349"/>
        <dbReference type="EC" id="1.1.1.47"/>
    </reaction>
</comment>
<comment type="cofactor">
    <cofactor evidence="1">
        <name>Zn(2+)</name>
        <dbReference type="ChEBI" id="CHEBI:29105"/>
    </cofactor>
</comment>
<comment type="similarity">
    <text evidence="1">Belongs to the zinc-containing alcohol dehydrogenase family. Glucose 1-dehydrogenase subfamily.</text>
</comment>
<sequence length="365" mass="39125">MKAIAVEPGAGTPTLIDLPVPEPAPGEALVRTLRVGVDGTDDEVIAGAHGGVPDGDDRLVLGHEAVGVVEDANGTDLEEGQYVVPTVRRPPPGVETNVYFERGEPDMAPEGEYVERGIVGAHGFMAEYFTSPADCLVPISADLAPVGFLVEPISITEKAIEHAAATRSAFDWRPESVFVLGNGSLGLLTAAMFRTTMGYDRVYCLGRRDRPHPSIDILDELGVTYIDSRETPVPEVPEVYEPMDLVYEATGYAKHAFESIEALAPNGVAALLGVPNDWSFEVDGGRLHREMVLHNKAIVGSVNSNRDQFASAVDTLAGLPSWVIEDVVSGVYGLEEYERAFSDPTDDATADDDTTIKTAVEFSNI</sequence>
<gene>
    <name evidence="1" type="primary">gdh1</name>
    <name type="ordered locus">Htur_2582</name>
</gene>
<organism>
    <name type="scientific">Haloterrigena turkmenica (strain ATCC 51198 / DSM 5511 / JCM 9101 / NCIMB 13204 / VKM B-1734 / 4k)</name>
    <name type="common">Halococcus turkmenicus</name>
    <dbReference type="NCBI Taxonomy" id="543526"/>
    <lineage>
        <taxon>Archaea</taxon>
        <taxon>Methanobacteriati</taxon>
        <taxon>Methanobacteriota</taxon>
        <taxon>Stenosarchaea group</taxon>
        <taxon>Halobacteria</taxon>
        <taxon>Halobacteriales</taxon>
        <taxon>Natrialbaceae</taxon>
        <taxon>Haloterrigena</taxon>
    </lineage>
</organism>
<evidence type="ECO:0000255" key="1">
    <source>
        <dbReference type="HAMAP-Rule" id="MF_02127"/>
    </source>
</evidence>
<reference key="1">
    <citation type="journal article" date="2010" name="Stand. Genomic Sci.">
        <title>Complete genome sequence of Haloterrigena turkmenica type strain (4k).</title>
        <authorList>
            <person name="Saunders E."/>
            <person name="Tindall B.J."/>
            <person name="Fahnrich R."/>
            <person name="Lapidus A."/>
            <person name="Copeland A."/>
            <person name="Del Rio T.G."/>
            <person name="Lucas S."/>
            <person name="Chen F."/>
            <person name="Tice H."/>
            <person name="Cheng J.F."/>
            <person name="Han C."/>
            <person name="Detter J.C."/>
            <person name="Bruce D."/>
            <person name="Goodwin L."/>
            <person name="Chain P."/>
            <person name="Pitluck S."/>
            <person name="Pati A."/>
            <person name="Ivanova N."/>
            <person name="Mavromatis K."/>
            <person name="Chen A."/>
            <person name="Palaniappan K."/>
            <person name="Land M."/>
            <person name="Hauser L."/>
            <person name="Chang Y.J."/>
            <person name="Jeffries C.D."/>
            <person name="Brettin T."/>
            <person name="Rohde M."/>
            <person name="Goker M."/>
            <person name="Bristow J."/>
            <person name="Eisen J.A."/>
            <person name="Markowitz V."/>
            <person name="Hugenholtz P."/>
            <person name="Klenk H.P."/>
            <person name="Kyrpides N.C."/>
        </authorList>
    </citation>
    <scope>NUCLEOTIDE SEQUENCE [LARGE SCALE GENOMIC DNA]</scope>
    <source>
        <strain>ATCC 51198 / DSM 5511 / JCM 9101 / NCIMB 13204 / VKM B-1734 / 4k</strain>
    </source>
</reference>
<protein>
    <recommendedName>
        <fullName evidence="1">Glucose 1-dehydrogenase 1</fullName>
        <shortName evidence="1">GDH 1</shortName>
        <shortName evidence="1">GlcDH 1</shortName>
        <ecNumber evidence="1">1.1.1.47</ecNumber>
    </recommendedName>
</protein>